<feature type="transit peptide" description="Mitochondrion" evidence="1">
    <location>
        <begin position="1"/>
        <end position="31"/>
    </location>
</feature>
<feature type="chain" id="PRO_0000013536" description="Heat shock 22 kDa protein, mitochondrial">
    <location>
        <begin position="32"/>
        <end position="202"/>
    </location>
</feature>
<feature type="domain" description="sHSP" evidence="2">
    <location>
        <begin position="94"/>
        <end position="202"/>
    </location>
</feature>
<dbReference type="EMBL" id="X86222">
    <property type="protein sequence ID" value="CAA60120.1"/>
    <property type="molecule type" value="mRNA"/>
</dbReference>
<dbReference type="PIR" id="S59528">
    <property type="entry name" value="S59528"/>
</dbReference>
<dbReference type="SMR" id="P46254"/>
<dbReference type="GO" id="GO:0005739">
    <property type="term" value="C:mitochondrion"/>
    <property type="evidence" value="ECO:0007669"/>
    <property type="project" value="UniProtKB-SubCell"/>
</dbReference>
<dbReference type="CDD" id="cd06464">
    <property type="entry name" value="ACD_sHsps-like"/>
    <property type="match status" value="1"/>
</dbReference>
<dbReference type="Gene3D" id="2.60.40.790">
    <property type="match status" value="1"/>
</dbReference>
<dbReference type="InterPro" id="IPR002068">
    <property type="entry name" value="A-crystallin/Hsp20_dom"/>
</dbReference>
<dbReference type="InterPro" id="IPR044656">
    <property type="entry name" value="HSP14.7/HSP23.5/HSP23.6-like"/>
</dbReference>
<dbReference type="InterPro" id="IPR008978">
    <property type="entry name" value="HSP20-like_chaperone"/>
</dbReference>
<dbReference type="PANTHER" id="PTHR46991">
    <property type="entry name" value="23.5 KDA HEAT SHOCK PROTEIN, MITOCHONDRIAL"/>
    <property type="match status" value="1"/>
</dbReference>
<dbReference type="PANTHER" id="PTHR46991:SF11">
    <property type="entry name" value="SMALL HEAT SHOCK PROTEIN HSPF"/>
    <property type="match status" value="1"/>
</dbReference>
<dbReference type="Pfam" id="PF00011">
    <property type="entry name" value="HSP20"/>
    <property type="match status" value="1"/>
</dbReference>
<dbReference type="SUPFAM" id="SSF49764">
    <property type="entry name" value="HSP20-like chaperones"/>
    <property type="match status" value="1"/>
</dbReference>
<dbReference type="PROSITE" id="PS01031">
    <property type="entry name" value="SHSP"/>
    <property type="match status" value="1"/>
</dbReference>
<reference key="1">
    <citation type="journal article" date="1995" name="Biochem. J.">
        <title>Sequence and expression of the mRNA encoding HSP22, the mitochondrial small heat-shock protein in pea leaves.</title>
        <authorList>
            <person name="Lenne C."/>
            <person name="Block M.A."/>
            <person name="Garin J."/>
            <person name="Douce R."/>
        </authorList>
    </citation>
    <scope>NUCLEOTIDE SEQUENCE [MRNA]</scope>
    <source>
        <strain>cv. Douce Provence</strain>
        <tissue>Leaf</tissue>
    </source>
</reference>
<keyword id="KW-0496">Mitochondrion</keyword>
<keyword id="KW-0346">Stress response</keyword>
<keyword id="KW-0809">Transit peptide</keyword>
<name>HS22M_PEA</name>
<organism>
    <name type="scientific">Pisum sativum</name>
    <name type="common">Garden pea</name>
    <name type="synonym">Lathyrus oleraceus</name>
    <dbReference type="NCBI Taxonomy" id="3888"/>
    <lineage>
        <taxon>Eukaryota</taxon>
        <taxon>Viridiplantae</taxon>
        <taxon>Streptophyta</taxon>
        <taxon>Embryophyta</taxon>
        <taxon>Tracheophyta</taxon>
        <taxon>Spermatophyta</taxon>
        <taxon>Magnoliopsida</taxon>
        <taxon>eudicotyledons</taxon>
        <taxon>Gunneridae</taxon>
        <taxon>Pentapetalae</taxon>
        <taxon>rosids</taxon>
        <taxon>fabids</taxon>
        <taxon>Fabales</taxon>
        <taxon>Fabaceae</taxon>
        <taxon>Papilionoideae</taxon>
        <taxon>50 kb inversion clade</taxon>
        <taxon>NPAAA clade</taxon>
        <taxon>Hologalegina</taxon>
        <taxon>IRL clade</taxon>
        <taxon>Fabeae</taxon>
        <taxon>Pisum</taxon>
    </lineage>
</organism>
<sequence length="202" mass="22878">MASSLALKRFLSSGLLSSSFLRPVASSASRSFNTNAMRQYDQHSDDRNVDVYRHSFPRTRRDDLLLSDVFDPFSPPRSLSQVLNMVDLLTDNPVLSAASRRGWDARETEDALFLRLDMPGLGKEDVKISVEQNTLTIKGEEGAKESEEKEKSGRRFSSRIDLPEKLYKIDVIKAEMKNGVLKVTVPKMKEEERNNVINVKVD</sequence>
<proteinExistence type="evidence at transcript level"/>
<evidence type="ECO:0000255" key="1"/>
<evidence type="ECO:0000255" key="2">
    <source>
        <dbReference type="PROSITE-ProRule" id="PRU00285"/>
    </source>
</evidence>
<gene>
    <name type="primary">HSP22</name>
</gene>
<comment type="subcellular location">
    <subcellularLocation>
        <location>Mitochondrion</location>
    </subcellularLocation>
</comment>
<comment type="similarity">
    <text evidence="2">Belongs to the small heat shock protein (HSP20) family.</text>
</comment>
<accession>P46254</accession>
<protein>
    <recommendedName>
        <fullName>Heat shock 22 kDa protein, mitochondrial</fullName>
    </recommendedName>
</protein>